<reference key="1">
    <citation type="journal article" date="2004" name="Nat. Genet.">
        <title>Complete sequencing and characterization of 21,243 full-length human cDNAs.</title>
        <authorList>
            <person name="Ota T."/>
            <person name="Suzuki Y."/>
            <person name="Nishikawa T."/>
            <person name="Otsuki T."/>
            <person name="Sugiyama T."/>
            <person name="Irie R."/>
            <person name="Wakamatsu A."/>
            <person name="Hayashi K."/>
            <person name="Sato H."/>
            <person name="Nagai K."/>
            <person name="Kimura K."/>
            <person name="Makita H."/>
            <person name="Sekine M."/>
            <person name="Obayashi M."/>
            <person name="Nishi T."/>
            <person name="Shibahara T."/>
            <person name="Tanaka T."/>
            <person name="Ishii S."/>
            <person name="Yamamoto J."/>
            <person name="Saito K."/>
            <person name="Kawai Y."/>
            <person name="Isono Y."/>
            <person name="Nakamura Y."/>
            <person name="Nagahari K."/>
            <person name="Murakami K."/>
            <person name="Yasuda T."/>
            <person name="Iwayanagi T."/>
            <person name="Wagatsuma M."/>
            <person name="Shiratori A."/>
            <person name="Sudo H."/>
            <person name="Hosoiri T."/>
            <person name="Kaku Y."/>
            <person name="Kodaira H."/>
            <person name="Kondo H."/>
            <person name="Sugawara M."/>
            <person name="Takahashi M."/>
            <person name="Kanda K."/>
            <person name="Yokoi T."/>
            <person name="Furuya T."/>
            <person name="Kikkawa E."/>
            <person name="Omura Y."/>
            <person name="Abe K."/>
            <person name="Kamihara K."/>
            <person name="Katsuta N."/>
            <person name="Sato K."/>
            <person name="Tanikawa M."/>
            <person name="Yamazaki M."/>
            <person name="Ninomiya K."/>
            <person name="Ishibashi T."/>
            <person name="Yamashita H."/>
            <person name="Murakawa K."/>
            <person name="Fujimori K."/>
            <person name="Tanai H."/>
            <person name="Kimata M."/>
            <person name="Watanabe M."/>
            <person name="Hiraoka S."/>
            <person name="Chiba Y."/>
            <person name="Ishida S."/>
            <person name="Ono Y."/>
            <person name="Takiguchi S."/>
            <person name="Watanabe S."/>
            <person name="Yosida M."/>
            <person name="Hotuta T."/>
            <person name="Kusano J."/>
            <person name="Kanehori K."/>
            <person name="Takahashi-Fujii A."/>
            <person name="Hara H."/>
            <person name="Tanase T.-O."/>
            <person name="Nomura Y."/>
            <person name="Togiya S."/>
            <person name="Komai F."/>
            <person name="Hara R."/>
            <person name="Takeuchi K."/>
            <person name="Arita M."/>
            <person name="Imose N."/>
            <person name="Musashino K."/>
            <person name="Yuuki H."/>
            <person name="Oshima A."/>
            <person name="Sasaki N."/>
            <person name="Aotsuka S."/>
            <person name="Yoshikawa Y."/>
            <person name="Matsunawa H."/>
            <person name="Ichihara T."/>
            <person name="Shiohata N."/>
            <person name="Sano S."/>
            <person name="Moriya S."/>
            <person name="Momiyama H."/>
            <person name="Satoh N."/>
            <person name="Takami S."/>
            <person name="Terashima Y."/>
            <person name="Suzuki O."/>
            <person name="Nakagawa S."/>
            <person name="Senoh A."/>
            <person name="Mizoguchi H."/>
            <person name="Goto Y."/>
            <person name="Shimizu F."/>
            <person name="Wakebe H."/>
            <person name="Hishigaki H."/>
            <person name="Watanabe T."/>
            <person name="Sugiyama A."/>
            <person name="Takemoto M."/>
            <person name="Kawakami B."/>
            <person name="Yamazaki M."/>
            <person name="Watanabe K."/>
            <person name="Kumagai A."/>
            <person name="Itakura S."/>
            <person name="Fukuzumi Y."/>
            <person name="Fujimori Y."/>
            <person name="Komiyama M."/>
            <person name="Tashiro H."/>
            <person name="Tanigami A."/>
            <person name="Fujiwara T."/>
            <person name="Ono T."/>
            <person name="Yamada K."/>
            <person name="Fujii Y."/>
            <person name="Ozaki K."/>
            <person name="Hirao M."/>
            <person name="Ohmori Y."/>
            <person name="Kawabata A."/>
            <person name="Hikiji T."/>
            <person name="Kobatake N."/>
            <person name="Inagaki H."/>
            <person name="Ikema Y."/>
            <person name="Okamoto S."/>
            <person name="Okitani R."/>
            <person name="Kawakami T."/>
            <person name="Noguchi S."/>
            <person name="Itoh T."/>
            <person name="Shigeta K."/>
            <person name="Senba T."/>
            <person name="Matsumura K."/>
            <person name="Nakajima Y."/>
            <person name="Mizuno T."/>
            <person name="Morinaga M."/>
            <person name="Sasaki M."/>
            <person name="Togashi T."/>
            <person name="Oyama M."/>
            <person name="Hata H."/>
            <person name="Watanabe M."/>
            <person name="Komatsu T."/>
            <person name="Mizushima-Sugano J."/>
            <person name="Satoh T."/>
            <person name="Shirai Y."/>
            <person name="Takahashi Y."/>
            <person name="Nakagawa K."/>
            <person name="Okumura K."/>
            <person name="Nagase T."/>
            <person name="Nomura N."/>
            <person name="Kikuchi H."/>
            <person name="Masuho Y."/>
            <person name="Yamashita R."/>
            <person name="Nakai K."/>
            <person name="Yada T."/>
            <person name="Nakamura Y."/>
            <person name="Ohara O."/>
            <person name="Isogai T."/>
            <person name="Sugano S."/>
        </authorList>
    </citation>
    <scope>NUCLEOTIDE SEQUENCE [LARGE SCALE MRNA] (ISOFORM 1)</scope>
    <source>
        <tissue>Placenta</tissue>
    </source>
</reference>
<reference key="2">
    <citation type="submission" date="2005-07" db="EMBL/GenBank/DDBJ databases">
        <authorList>
            <person name="Mural R.J."/>
            <person name="Istrail S."/>
            <person name="Sutton G.G."/>
            <person name="Florea L."/>
            <person name="Halpern A.L."/>
            <person name="Mobarry C.M."/>
            <person name="Lippert R."/>
            <person name="Walenz B."/>
            <person name="Shatkay H."/>
            <person name="Dew I."/>
            <person name="Miller J.R."/>
            <person name="Flanigan M.J."/>
            <person name="Edwards N.J."/>
            <person name="Bolanos R."/>
            <person name="Fasulo D."/>
            <person name="Halldorsson B.V."/>
            <person name="Hannenhalli S."/>
            <person name="Turner R."/>
            <person name="Yooseph S."/>
            <person name="Lu F."/>
            <person name="Nusskern D.R."/>
            <person name="Shue B.C."/>
            <person name="Zheng X.H."/>
            <person name="Zhong F."/>
            <person name="Delcher A.L."/>
            <person name="Huson D.H."/>
            <person name="Kravitz S.A."/>
            <person name="Mouchard L."/>
            <person name="Reinert K."/>
            <person name="Remington K.A."/>
            <person name="Clark A.G."/>
            <person name="Waterman M.S."/>
            <person name="Eichler E.E."/>
            <person name="Adams M.D."/>
            <person name="Hunkapiller M.W."/>
            <person name="Myers E.W."/>
            <person name="Venter J.C."/>
        </authorList>
    </citation>
    <scope>NUCLEOTIDE SEQUENCE [LARGE SCALE GENOMIC DNA]</scope>
</reference>
<reference key="3">
    <citation type="journal article" date="2004" name="Genome Res.">
        <title>The status, quality, and expansion of the NIH full-length cDNA project: the Mammalian Gene Collection (MGC).</title>
        <authorList>
            <consortium name="The MGC Project Team"/>
        </authorList>
    </citation>
    <scope>NUCLEOTIDE SEQUENCE [LARGE SCALE MRNA] (ISOFORMS 1 AND 2)</scope>
    <source>
        <tissue>Skeletal muscle</tissue>
    </source>
</reference>
<feature type="chain" id="PRO_0000285296" description="Zinc finger protein 114">
    <location>
        <begin position="1"/>
        <end position="417"/>
    </location>
</feature>
<feature type="domain" description="KRAB" evidence="2">
    <location>
        <begin position="6"/>
        <end position="85"/>
    </location>
</feature>
<feature type="zinc finger region" description="C2H2-type 1" evidence="1">
    <location>
        <begin position="304"/>
        <end position="326"/>
    </location>
</feature>
<feature type="zinc finger region" description="C2H2-type 2" evidence="1">
    <location>
        <begin position="332"/>
        <end position="354"/>
    </location>
</feature>
<feature type="zinc finger region" description="C2H2-type 3" evidence="1">
    <location>
        <begin position="361"/>
        <end position="382"/>
    </location>
</feature>
<feature type="zinc finger region" description="C2H2-type 4" evidence="1">
    <location>
        <begin position="388"/>
        <end position="410"/>
    </location>
</feature>
<feature type="region of interest" description="Disordered" evidence="3">
    <location>
        <begin position="95"/>
        <end position="116"/>
    </location>
</feature>
<feature type="region of interest" description="Disordered" evidence="3">
    <location>
        <begin position="280"/>
        <end position="301"/>
    </location>
</feature>
<feature type="compositionally biased region" description="Polar residues" evidence="3">
    <location>
        <begin position="281"/>
        <end position="293"/>
    </location>
</feature>
<feature type="splice variant" id="VSP_024864" description="In isoform 2." evidence="4">
    <location>
        <begin position="1"/>
        <end position="34"/>
    </location>
</feature>
<feature type="sequence variant" id="VAR_052769" description="In dbSNP:rs35802964.">
    <original>H</original>
    <variation>N</variation>
    <location>
        <position position="99"/>
    </location>
</feature>
<feature type="sequence variant" id="VAR_052770" description="In dbSNP:rs16981956.">
    <original>V</original>
    <variation>A</variation>
    <location>
        <position position="207"/>
    </location>
</feature>
<accession>Q8NC26</accession>
<accession>A8K6B0</accession>
<accession>Q08AQ6</accession>
<dbReference type="EMBL" id="AK075062">
    <property type="protein sequence ID" value="BAC11378.1"/>
    <property type="molecule type" value="mRNA"/>
</dbReference>
<dbReference type="EMBL" id="AK291575">
    <property type="protein sequence ID" value="BAF84264.1"/>
    <property type="molecule type" value="mRNA"/>
</dbReference>
<dbReference type="EMBL" id="CH471177">
    <property type="protein sequence ID" value="EAW52326.1"/>
    <property type="molecule type" value="Genomic_DNA"/>
</dbReference>
<dbReference type="EMBL" id="BC125068">
    <property type="protein sequence ID" value="AAI25069.1"/>
    <property type="molecule type" value="mRNA"/>
</dbReference>
<dbReference type="EMBL" id="BC125069">
    <property type="protein sequence ID" value="AAI25070.1"/>
    <property type="molecule type" value="mRNA"/>
</dbReference>
<dbReference type="CCDS" id="CCDS12713.1">
    <molecule id="Q8NC26-1"/>
</dbReference>
<dbReference type="RefSeq" id="NP_001318026.1">
    <molecule id="Q8NC26-1"/>
    <property type="nucleotide sequence ID" value="NM_001331097.1"/>
</dbReference>
<dbReference type="RefSeq" id="NP_001356740.1">
    <molecule id="Q8NC26-1"/>
    <property type="nucleotide sequence ID" value="NM_001369811.1"/>
</dbReference>
<dbReference type="RefSeq" id="NP_001356741.1">
    <molecule id="Q8NC26-1"/>
    <property type="nucleotide sequence ID" value="NM_001369812.1"/>
</dbReference>
<dbReference type="RefSeq" id="NP_705836.1">
    <molecule id="Q8NC26-1"/>
    <property type="nucleotide sequence ID" value="NM_153608.4"/>
</dbReference>
<dbReference type="SMR" id="Q8NC26"/>
<dbReference type="BioGRID" id="127847">
    <property type="interactions" value="28"/>
</dbReference>
<dbReference type="FunCoup" id="Q8NC26">
    <property type="interactions" value="19"/>
</dbReference>
<dbReference type="IntAct" id="Q8NC26">
    <property type="interactions" value="17"/>
</dbReference>
<dbReference type="STRING" id="9606.ENSP00000469998"/>
<dbReference type="GlyGen" id="Q8NC26">
    <property type="glycosylation" value="1 site, 1 O-linked glycan (1 site)"/>
</dbReference>
<dbReference type="iPTMnet" id="Q8NC26"/>
<dbReference type="PhosphoSitePlus" id="Q8NC26"/>
<dbReference type="BioMuta" id="ZNF114"/>
<dbReference type="DMDM" id="74760124"/>
<dbReference type="jPOST" id="Q8NC26"/>
<dbReference type="MassIVE" id="Q8NC26"/>
<dbReference type="PaxDb" id="9606-ENSP00000469998"/>
<dbReference type="PeptideAtlas" id="Q8NC26"/>
<dbReference type="ProteomicsDB" id="72845">
    <molecule id="Q8NC26-1"/>
</dbReference>
<dbReference type="ProteomicsDB" id="72846">
    <molecule id="Q8NC26-2"/>
</dbReference>
<dbReference type="Antibodypedia" id="18297">
    <property type="antibodies" value="100 antibodies from 19 providers"/>
</dbReference>
<dbReference type="DNASU" id="163071"/>
<dbReference type="Ensembl" id="ENST00000315849.5">
    <molecule id="Q8NC26-1"/>
    <property type="protein sequence ID" value="ENSP00000318898.1"/>
    <property type="gene ID" value="ENSG00000178150.10"/>
</dbReference>
<dbReference type="Ensembl" id="ENST00000595607.6">
    <molecule id="Q8NC26-1"/>
    <property type="protein sequence ID" value="ENSP00000469998.1"/>
    <property type="gene ID" value="ENSG00000178150.10"/>
</dbReference>
<dbReference type="Ensembl" id="ENST00000600687.5">
    <molecule id="Q8NC26-1"/>
    <property type="protein sequence ID" value="ENSP00000471727.1"/>
    <property type="gene ID" value="ENSG00000178150.10"/>
</dbReference>
<dbReference type="GeneID" id="163071"/>
<dbReference type="KEGG" id="hsa:163071"/>
<dbReference type="MANE-Select" id="ENST00000595607.6">
    <property type="protein sequence ID" value="ENSP00000469998.1"/>
    <property type="RefSeq nucleotide sequence ID" value="NM_153608.4"/>
    <property type="RefSeq protein sequence ID" value="NP_705836.1"/>
</dbReference>
<dbReference type="UCSC" id="uc002pil.2">
    <molecule id="Q8NC26-1"/>
    <property type="organism name" value="human"/>
</dbReference>
<dbReference type="AGR" id="HGNC:12894"/>
<dbReference type="CTD" id="163071"/>
<dbReference type="DisGeNET" id="163071"/>
<dbReference type="GeneCards" id="ZNF114"/>
<dbReference type="HGNC" id="HGNC:12894">
    <property type="gene designation" value="ZNF114"/>
</dbReference>
<dbReference type="HPA" id="ENSG00000178150">
    <property type="expression patterns" value="Tissue enhanced (thyroid)"/>
</dbReference>
<dbReference type="MIM" id="603996">
    <property type="type" value="gene"/>
</dbReference>
<dbReference type="neXtProt" id="NX_Q8NC26"/>
<dbReference type="OpenTargets" id="ENSG00000178150"/>
<dbReference type="PharmGKB" id="PA37483"/>
<dbReference type="VEuPathDB" id="HostDB:ENSG00000178150"/>
<dbReference type="eggNOG" id="KOG1721">
    <property type="taxonomic scope" value="Eukaryota"/>
</dbReference>
<dbReference type="GeneTree" id="ENSGT01130000278311"/>
<dbReference type="HOGENOM" id="CLU_002678_0_2_1"/>
<dbReference type="InParanoid" id="Q8NC26"/>
<dbReference type="OMA" id="YVYQSFL"/>
<dbReference type="OrthoDB" id="9475591at2759"/>
<dbReference type="PAN-GO" id="Q8NC26">
    <property type="GO annotations" value="3 GO annotations based on evolutionary models"/>
</dbReference>
<dbReference type="PhylomeDB" id="Q8NC26"/>
<dbReference type="TreeFam" id="TF341761"/>
<dbReference type="PathwayCommons" id="Q8NC26"/>
<dbReference type="Reactome" id="R-HSA-212436">
    <property type="pathway name" value="Generic Transcription Pathway"/>
</dbReference>
<dbReference type="SignaLink" id="Q8NC26"/>
<dbReference type="BioGRID-ORCS" id="163071">
    <property type="hits" value="10 hits in 1161 CRISPR screens"/>
</dbReference>
<dbReference type="GenomeRNAi" id="163071"/>
<dbReference type="Pharos" id="Q8NC26">
    <property type="development level" value="Tdark"/>
</dbReference>
<dbReference type="PRO" id="PR:Q8NC26"/>
<dbReference type="Proteomes" id="UP000005640">
    <property type="component" value="Chromosome 19"/>
</dbReference>
<dbReference type="RNAct" id="Q8NC26">
    <property type="molecule type" value="protein"/>
</dbReference>
<dbReference type="Bgee" id="ENSG00000178150">
    <property type="expression patterns" value="Expressed in buccal mucosa cell and 108 other cell types or tissues"/>
</dbReference>
<dbReference type="ExpressionAtlas" id="Q8NC26">
    <property type="expression patterns" value="baseline and differential"/>
</dbReference>
<dbReference type="GO" id="GO:0070062">
    <property type="term" value="C:extracellular exosome"/>
    <property type="evidence" value="ECO:0007005"/>
    <property type="project" value="UniProtKB"/>
</dbReference>
<dbReference type="GO" id="GO:0005634">
    <property type="term" value="C:nucleus"/>
    <property type="evidence" value="ECO:0007669"/>
    <property type="project" value="UniProtKB-SubCell"/>
</dbReference>
<dbReference type="GO" id="GO:0000981">
    <property type="term" value="F:DNA-binding transcription factor activity, RNA polymerase II-specific"/>
    <property type="evidence" value="ECO:0000318"/>
    <property type="project" value="GO_Central"/>
</dbReference>
<dbReference type="GO" id="GO:0042802">
    <property type="term" value="F:identical protein binding"/>
    <property type="evidence" value="ECO:0000353"/>
    <property type="project" value="IntAct"/>
</dbReference>
<dbReference type="GO" id="GO:0000978">
    <property type="term" value="F:RNA polymerase II cis-regulatory region sequence-specific DNA binding"/>
    <property type="evidence" value="ECO:0000318"/>
    <property type="project" value="GO_Central"/>
</dbReference>
<dbReference type="GO" id="GO:0008270">
    <property type="term" value="F:zinc ion binding"/>
    <property type="evidence" value="ECO:0007669"/>
    <property type="project" value="UniProtKB-KW"/>
</dbReference>
<dbReference type="GO" id="GO:0006355">
    <property type="term" value="P:regulation of DNA-templated transcription"/>
    <property type="evidence" value="ECO:0000318"/>
    <property type="project" value="GO_Central"/>
</dbReference>
<dbReference type="CDD" id="cd07765">
    <property type="entry name" value="KRAB_A-box"/>
    <property type="match status" value="1"/>
</dbReference>
<dbReference type="FunFam" id="3.30.160.60:FF:000557">
    <property type="entry name" value="zinc finger and SCAN domain-containing protein 29"/>
    <property type="match status" value="1"/>
</dbReference>
<dbReference type="FunFam" id="3.30.160.60:FF:002198">
    <property type="entry name" value="Zinc finger protein 114"/>
    <property type="match status" value="1"/>
</dbReference>
<dbReference type="FunFam" id="3.30.160.60:FF:002316">
    <property type="entry name" value="Zinc finger protein 114"/>
    <property type="match status" value="1"/>
</dbReference>
<dbReference type="FunFam" id="3.30.160.60:FF:003511">
    <property type="entry name" value="Zinc finger protein 114"/>
    <property type="match status" value="1"/>
</dbReference>
<dbReference type="Gene3D" id="6.10.140.140">
    <property type="match status" value="1"/>
</dbReference>
<dbReference type="Gene3D" id="3.30.160.60">
    <property type="entry name" value="Classic Zinc Finger"/>
    <property type="match status" value="4"/>
</dbReference>
<dbReference type="InterPro" id="IPR001909">
    <property type="entry name" value="KRAB"/>
</dbReference>
<dbReference type="InterPro" id="IPR036051">
    <property type="entry name" value="KRAB_dom_sf"/>
</dbReference>
<dbReference type="InterPro" id="IPR036236">
    <property type="entry name" value="Znf_C2H2_sf"/>
</dbReference>
<dbReference type="InterPro" id="IPR013087">
    <property type="entry name" value="Znf_C2H2_type"/>
</dbReference>
<dbReference type="PANTHER" id="PTHR24381">
    <property type="entry name" value="ZINC FINGER PROTEIN"/>
    <property type="match status" value="1"/>
</dbReference>
<dbReference type="PANTHER" id="PTHR24381:SF390">
    <property type="entry name" value="ZINC FINGER PROTEIN 37 HOMOLOG"/>
    <property type="match status" value="1"/>
</dbReference>
<dbReference type="Pfam" id="PF01352">
    <property type="entry name" value="KRAB"/>
    <property type="match status" value="1"/>
</dbReference>
<dbReference type="Pfam" id="PF00096">
    <property type="entry name" value="zf-C2H2"/>
    <property type="match status" value="1"/>
</dbReference>
<dbReference type="Pfam" id="PF13465">
    <property type="entry name" value="zf-H2C2_2"/>
    <property type="match status" value="1"/>
</dbReference>
<dbReference type="SMART" id="SM00349">
    <property type="entry name" value="KRAB"/>
    <property type="match status" value="1"/>
</dbReference>
<dbReference type="SMART" id="SM00355">
    <property type="entry name" value="ZnF_C2H2"/>
    <property type="match status" value="4"/>
</dbReference>
<dbReference type="SUPFAM" id="SSF57667">
    <property type="entry name" value="beta-beta-alpha zinc fingers"/>
    <property type="match status" value="2"/>
</dbReference>
<dbReference type="SUPFAM" id="SSF109640">
    <property type="entry name" value="KRAB domain (Kruppel-associated box)"/>
    <property type="match status" value="1"/>
</dbReference>
<dbReference type="PROSITE" id="PS50805">
    <property type="entry name" value="KRAB"/>
    <property type="match status" value="1"/>
</dbReference>
<dbReference type="PROSITE" id="PS00028">
    <property type="entry name" value="ZINC_FINGER_C2H2_1"/>
    <property type="match status" value="3"/>
</dbReference>
<dbReference type="PROSITE" id="PS50157">
    <property type="entry name" value="ZINC_FINGER_C2H2_2"/>
    <property type="match status" value="4"/>
</dbReference>
<comment type="function">
    <text>May be involved in transcriptional regulation.</text>
</comment>
<comment type="interaction">
    <interactant intactId="EBI-10265237">
        <id>Q8NC26</id>
    </interactant>
    <interactant intactId="EBI-11028020">
        <id>Q86UT8</id>
        <label>CENATAC</label>
    </interactant>
    <organismsDiffer>false</organismsDiffer>
    <experiments>3</experiments>
</comment>
<comment type="interaction">
    <interactant intactId="EBI-10265237">
        <id>Q8NC26</id>
    </interactant>
    <interactant intactId="EBI-5655540">
        <id>Q8N3C7</id>
        <label>CLIP4</label>
    </interactant>
    <organismsDiffer>false</organismsDiffer>
    <experiments>7</experiments>
</comment>
<comment type="interaction">
    <interactant intactId="EBI-10265237">
        <id>Q8NC26</id>
    </interactant>
    <interactant intactId="EBI-2805604">
        <id>Q2KHM9</id>
        <label>KIAA0753</label>
    </interactant>
    <organismsDiffer>false</organismsDiffer>
    <experiments>3</experiments>
</comment>
<comment type="interaction">
    <interactant intactId="EBI-10265237">
        <id>Q8NC26</id>
    </interactant>
    <interactant intactId="EBI-746999">
        <id>O95198</id>
        <label>KLHL2</label>
    </interactant>
    <organismsDiffer>false</organismsDiffer>
    <experiments>8</experiments>
</comment>
<comment type="interaction">
    <interactant intactId="EBI-10265237">
        <id>Q8NC26</id>
    </interactant>
    <interactant intactId="EBI-12012928">
        <id>P60371</id>
        <label>KRTAP10-6</label>
    </interactant>
    <organismsDiffer>false</organismsDiffer>
    <experiments>3</experiments>
</comment>
<comment type="interaction">
    <interactant intactId="EBI-10265237">
        <id>Q8NC26</id>
    </interactant>
    <interactant intactId="EBI-2211064">
        <id>Q14244</id>
        <label>MAP7</label>
    </interactant>
    <organismsDiffer>false</organismsDiffer>
    <experiments>3</experiments>
</comment>
<comment type="interaction">
    <interactant intactId="EBI-10265237">
        <id>Q8NC26</id>
    </interactant>
    <interactant intactId="EBI-7950783">
        <id>Q96JP2</id>
        <label>MYO15B</label>
    </interactant>
    <organismsDiffer>false</organismsDiffer>
    <experiments>3</experiments>
</comment>
<comment type="interaction">
    <interactant intactId="EBI-10265237">
        <id>Q8NC26</id>
    </interactant>
    <interactant intactId="EBI-740595">
        <id>Q9UMX1</id>
        <label>SUFU</label>
    </interactant>
    <organismsDiffer>false</organismsDiffer>
    <experiments>3</experiments>
</comment>
<comment type="interaction">
    <interactant intactId="EBI-10265237">
        <id>Q8NC26</id>
    </interactant>
    <interactant intactId="EBI-3927802">
        <id>O94811</id>
        <label>TPPP</label>
    </interactant>
    <organismsDiffer>false</organismsDiffer>
    <experiments>3</experiments>
</comment>
<comment type="interaction">
    <interactant intactId="EBI-10265237">
        <id>Q8NC26</id>
    </interactant>
    <interactant intactId="EBI-10265237">
        <id>Q8NC26</id>
        <label>ZNF114</label>
    </interactant>
    <organismsDiffer>false</organismsDiffer>
    <experiments>4</experiments>
</comment>
<comment type="interaction">
    <interactant intactId="EBI-10265237">
        <id>Q8NC26</id>
    </interactant>
    <interactant intactId="EBI-2555757">
        <id>P17098</id>
        <label>ZNF8</label>
    </interactant>
    <organismsDiffer>false</organismsDiffer>
    <experiments>3</experiments>
</comment>
<comment type="subcellular location">
    <subcellularLocation>
        <location evidence="5">Nucleus</location>
    </subcellularLocation>
</comment>
<comment type="alternative products">
    <event type="alternative splicing"/>
    <isoform>
        <id>Q8NC26-1</id>
        <name>1</name>
        <sequence type="displayed"/>
    </isoform>
    <isoform>
        <id>Q8NC26-2</id>
        <name>2</name>
        <sequence type="described" ref="VSP_024864"/>
    </isoform>
</comment>
<comment type="similarity">
    <text evidence="5">Belongs to the krueppel C2H2-type zinc-finger protein family.</text>
</comment>
<gene>
    <name type="primary">ZNF114</name>
</gene>
<organism>
    <name type="scientific">Homo sapiens</name>
    <name type="common">Human</name>
    <dbReference type="NCBI Taxonomy" id="9606"/>
    <lineage>
        <taxon>Eukaryota</taxon>
        <taxon>Metazoa</taxon>
        <taxon>Chordata</taxon>
        <taxon>Craniata</taxon>
        <taxon>Vertebrata</taxon>
        <taxon>Euteleostomi</taxon>
        <taxon>Mammalia</taxon>
        <taxon>Eutheria</taxon>
        <taxon>Euarchontoglires</taxon>
        <taxon>Primates</taxon>
        <taxon>Haplorrhini</taxon>
        <taxon>Catarrhini</taxon>
        <taxon>Hominidae</taxon>
        <taxon>Homo</taxon>
    </lineage>
</organism>
<protein>
    <recommendedName>
        <fullName>Zinc finger protein 114</fullName>
    </recommendedName>
</protein>
<keyword id="KW-0025">Alternative splicing</keyword>
<keyword id="KW-0238">DNA-binding</keyword>
<keyword id="KW-0479">Metal-binding</keyword>
<keyword id="KW-0539">Nucleus</keyword>
<keyword id="KW-1267">Proteomics identification</keyword>
<keyword id="KW-1185">Reference proteome</keyword>
<keyword id="KW-0677">Repeat</keyword>
<keyword id="KW-0804">Transcription</keyword>
<keyword id="KW-0805">Transcription regulation</keyword>
<keyword id="KW-0862">Zinc</keyword>
<keyword id="KW-0863">Zinc-finger</keyword>
<evidence type="ECO:0000255" key="1">
    <source>
        <dbReference type="PROSITE-ProRule" id="PRU00042"/>
    </source>
</evidence>
<evidence type="ECO:0000255" key="2">
    <source>
        <dbReference type="PROSITE-ProRule" id="PRU00119"/>
    </source>
</evidence>
<evidence type="ECO:0000256" key="3">
    <source>
        <dbReference type="SAM" id="MobiDB-lite"/>
    </source>
</evidence>
<evidence type="ECO:0000303" key="4">
    <source>
    </source>
</evidence>
<evidence type="ECO:0000305" key="5"/>
<name>ZN114_HUMAN</name>
<sequence>MSQDSVTFADVAVNFTKEEWTLLDPAQRNLYRDVMLENSRNLAFIDWATPCKTKDATPQPDILPKRTFPEANRVCLTSISSQHSTLREDWRCPKTEEPHRQGVNNVKPPAVAPEKDESPVSICEDHEMRNHSKPTCRLVPSQGDSIRQCILTRDSSIFKYNPVLNDSQKTHENNEDDGVLGWNIQWVPCGRKTELKSSTWTGSQNTVHHIRDEIDTGANRHQRNPFGKAFREDGSLRAHNTHGREKMYDFTQCENTSRNNSIHAMQMQLYTAETNKKDCQTGATSANAPNSGSHKSHCTGEKTHKCPECGRAFFYQSFLMRHMKIHTGEKPYECGKCGKAFRYSLHLNKHLRKHVVQKKPYECEECGKVIRESSKYTHIRSHTGEKPYKCKTCGKDFAKSSGLKKHLKTHKDEKPCE</sequence>
<proteinExistence type="evidence at protein level"/>